<sequence>MHIKVVHKSVKIKFSKMHGLGNDFIIINAMMQKTFPVTSNIIQNLSNRYTGIGFDQLLLVENSKNVNIDFHYRIFNANGTEVSQCGNGARCFALFVLLKKLTKKRTLYVSTNTTTLILNVLNNGNVCVDMGVPCFKLKNIFGENIIENSLHSIKFVNKIINYDLVSIGNPHCIIYVNNLKKYPVKKIGFYLSTHKIFPEGINVNFVEVLSKNEIALRVYERGVGETLACGSGACASVALGIQQGLLFNEVQVNLLNGILKINWKGGSEKLYMTGPAVHVYDGYFYL</sequence>
<feature type="chain" id="PRO_0000149827" description="Diaminopimelate epimerase">
    <location>
        <begin position="1"/>
        <end position="286"/>
    </location>
</feature>
<feature type="active site" description="Proton donor" evidence="1">
    <location>
        <position position="85"/>
    </location>
</feature>
<feature type="active site" description="Proton acceptor" evidence="1">
    <location>
        <position position="229"/>
    </location>
</feature>
<feature type="binding site" evidence="1">
    <location>
        <position position="22"/>
    </location>
    <ligand>
        <name>substrate</name>
    </ligand>
</feature>
<feature type="binding site" evidence="1">
    <location>
        <position position="56"/>
    </location>
    <ligand>
        <name>substrate</name>
    </ligand>
</feature>
<feature type="binding site" evidence="1">
    <location>
        <position position="76"/>
    </location>
    <ligand>
        <name>substrate</name>
    </ligand>
</feature>
<feature type="binding site" evidence="1">
    <location>
        <begin position="86"/>
        <end position="87"/>
    </location>
    <ligand>
        <name>substrate</name>
    </ligand>
</feature>
<feature type="binding site" evidence="1">
    <location>
        <position position="169"/>
    </location>
    <ligand>
        <name>substrate</name>
    </ligand>
</feature>
<feature type="binding site" evidence="1">
    <location>
        <position position="202"/>
    </location>
    <ligand>
        <name>substrate</name>
    </ligand>
</feature>
<feature type="binding site" evidence="1">
    <location>
        <begin position="220"/>
        <end position="221"/>
    </location>
    <ligand>
        <name>substrate</name>
    </ligand>
</feature>
<feature type="binding site" evidence="1">
    <location>
        <begin position="230"/>
        <end position="231"/>
    </location>
    <ligand>
        <name>substrate</name>
    </ligand>
</feature>
<feature type="site" description="Could be important to modulate the pK values of the two catalytic cysteine residues" evidence="1">
    <location>
        <position position="171"/>
    </location>
</feature>
<feature type="site" description="Could be important to modulate the pK values of the two catalytic cysteine residues" evidence="1">
    <location>
        <position position="220"/>
    </location>
</feature>
<feature type="site" description="Important for dimerization" evidence="1">
    <location>
        <position position="280"/>
    </location>
</feature>
<gene>
    <name evidence="1" type="primary">dapF</name>
    <name type="ordered locus">bbp_533</name>
</gene>
<protein>
    <recommendedName>
        <fullName evidence="1">Diaminopimelate epimerase</fullName>
        <shortName evidence="1">DAP epimerase</shortName>
        <ecNumber evidence="1">5.1.1.7</ecNumber>
    </recommendedName>
    <alternativeName>
        <fullName evidence="1">PLP-independent amino acid racemase</fullName>
    </alternativeName>
</protein>
<comment type="function">
    <text evidence="1">Catalyzes the stereoinversion of LL-2,6-diaminopimelate (L,L-DAP) to meso-diaminopimelate (meso-DAP), a precursor of L-lysine and an essential component of the bacterial peptidoglycan.</text>
</comment>
<comment type="catalytic activity">
    <reaction evidence="1">
        <text>(2S,6S)-2,6-diaminopimelate = meso-2,6-diaminopimelate</text>
        <dbReference type="Rhea" id="RHEA:15393"/>
        <dbReference type="ChEBI" id="CHEBI:57609"/>
        <dbReference type="ChEBI" id="CHEBI:57791"/>
        <dbReference type="EC" id="5.1.1.7"/>
    </reaction>
</comment>
<comment type="pathway">
    <text evidence="1">Amino-acid biosynthesis; L-lysine biosynthesis via DAP pathway; DL-2,6-diaminopimelate from LL-2,6-diaminopimelate: step 1/1.</text>
</comment>
<comment type="subunit">
    <text evidence="1">Homodimer.</text>
</comment>
<comment type="subcellular location">
    <subcellularLocation>
        <location evidence="1">Cytoplasm</location>
    </subcellularLocation>
</comment>
<comment type="similarity">
    <text evidence="1">Belongs to the diaminopimelate epimerase family.</text>
</comment>
<dbReference type="EC" id="5.1.1.7" evidence="1"/>
<dbReference type="EMBL" id="AE016826">
    <property type="protein sequence ID" value="AAO27235.1"/>
    <property type="molecule type" value="Genomic_DNA"/>
</dbReference>
<dbReference type="RefSeq" id="WP_011091636.1">
    <property type="nucleotide sequence ID" value="NC_004545.1"/>
</dbReference>
<dbReference type="SMR" id="P59582"/>
<dbReference type="STRING" id="224915.bbp_533"/>
<dbReference type="KEGG" id="bab:bbp_533"/>
<dbReference type="eggNOG" id="COG0253">
    <property type="taxonomic scope" value="Bacteria"/>
</dbReference>
<dbReference type="HOGENOM" id="CLU_053306_1_1_6"/>
<dbReference type="OrthoDB" id="9805408at2"/>
<dbReference type="UniPathway" id="UPA00034">
    <property type="reaction ID" value="UER00025"/>
</dbReference>
<dbReference type="Proteomes" id="UP000000601">
    <property type="component" value="Chromosome"/>
</dbReference>
<dbReference type="GO" id="GO:0005829">
    <property type="term" value="C:cytosol"/>
    <property type="evidence" value="ECO:0007669"/>
    <property type="project" value="TreeGrafter"/>
</dbReference>
<dbReference type="GO" id="GO:0008837">
    <property type="term" value="F:diaminopimelate epimerase activity"/>
    <property type="evidence" value="ECO:0007669"/>
    <property type="project" value="UniProtKB-UniRule"/>
</dbReference>
<dbReference type="GO" id="GO:0009089">
    <property type="term" value="P:lysine biosynthetic process via diaminopimelate"/>
    <property type="evidence" value="ECO:0007669"/>
    <property type="project" value="UniProtKB-UniRule"/>
</dbReference>
<dbReference type="FunFam" id="3.10.310.10:FF:000001">
    <property type="entry name" value="Diaminopimelate epimerase"/>
    <property type="match status" value="1"/>
</dbReference>
<dbReference type="Gene3D" id="3.10.310.10">
    <property type="entry name" value="Diaminopimelate Epimerase, Chain A, domain 1"/>
    <property type="match status" value="2"/>
</dbReference>
<dbReference type="HAMAP" id="MF_00197">
    <property type="entry name" value="DAP_epimerase"/>
    <property type="match status" value="1"/>
</dbReference>
<dbReference type="InterPro" id="IPR018510">
    <property type="entry name" value="DAP_epimerase_AS"/>
</dbReference>
<dbReference type="InterPro" id="IPR001653">
    <property type="entry name" value="DAP_epimerase_DapF"/>
</dbReference>
<dbReference type="NCBIfam" id="TIGR00652">
    <property type="entry name" value="DapF"/>
    <property type="match status" value="1"/>
</dbReference>
<dbReference type="PANTHER" id="PTHR31689:SF0">
    <property type="entry name" value="DIAMINOPIMELATE EPIMERASE"/>
    <property type="match status" value="1"/>
</dbReference>
<dbReference type="PANTHER" id="PTHR31689">
    <property type="entry name" value="DIAMINOPIMELATE EPIMERASE, CHLOROPLASTIC"/>
    <property type="match status" value="1"/>
</dbReference>
<dbReference type="Pfam" id="PF01678">
    <property type="entry name" value="DAP_epimerase"/>
    <property type="match status" value="2"/>
</dbReference>
<dbReference type="SUPFAM" id="SSF54506">
    <property type="entry name" value="Diaminopimelate epimerase-like"/>
    <property type="match status" value="2"/>
</dbReference>
<dbReference type="PROSITE" id="PS01326">
    <property type="entry name" value="DAP_EPIMERASE"/>
    <property type="match status" value="1"/>
</dbReference>
<name>DAPF_BUCBP</name>
<reference key="1">
    <citation type="journal article" date="2003" name="Proc. Natl. Acad. Sci. U.S.A.">
        <title>Reductive genome evolution in Buchnera aphidicola.</title>
        <authorList>
            <person name="van Ham R.C.H.J."/>
            <person name="Kamerbeek J."/>
            <person name="Palacios C."/>
            <person name="Rausell C."/>
            <person name="Abascal F."/>
            <person name="Bastolla U."/>
            <person name="Fernandez J.M."/>
            <person name="Jimenez L."/>
            <person name="Postigo M."/>
            <person name="Silva F.J."/>
            <person name="Tamames J."/>
            <person name="Viguera E."/>
            <person name="Latorre A."/>
            <person name="Valencia A."/>
            <person name="Moran F."/>
            <person name="Moya A."/>
        </authorList>
    </citation>
    <scope>NUCLEOTIDE SEQUENCE [LARGE SCALE GENOMIC DNA]</scope>
    <source>
        <strain>Bp</strain>
    </source>
</reference>
<organism>
    <name type="scientific">Buchnera aphidicola subsp. Baizongia pistaciae (strain Bp)</name>
    <dbReference type="NCBI Taxonomy" id="224915"/>
    <lineage>
        <taxon>Bacteria</taxon>
        <taxon>Pseudomonadati</taxon>
        <taxon>Pseudomonadota</taxon>
        <taxon>Gammaproteobacteria</taxon>
        <taxon>Enterobacterales</taxon>
        <taxon>Erwiniaceae</taxon>
        <taxon>Buchnera</taxon>
    </lineage>
</organism>
<keyword id="KW-0028">Amino-acid biosynthesis</keyword>
<keyword id="KW-0963">Cytoplasm</keyword>
<keyword id="KW-0413">Isomerase</keyword>
<keyword id="KW-0457">Lysine biosynthesis</keyword>
<keyword id="KW-1185">Reference proteome</keyword>
<proteinExistence type="inferred from homology"/>
<accession>P59582</accession>
<evidence type="ECO:0000255" key="1">
    <source>
        <dbReference type="HAMAP-Rule" id="MF_00197"/>
    </source>
</evidence>